<organism>
    <name type="scientific">Clostridium tetani (strain Massachusetts / E88)</name>
    <dbReference type="NCBI Taxonomy" id="212717"/>
    <lineage>
        <taxon>Bacteria</taxon>
        <taxon>Bacillati</taxon>
        <taxon>Bacillota</taxon>
        <taxon>Clostridia</taxon>
        <taxon>Eubacteriales</taxon>
        <taxon>Clostridiaceae</taxon>
        <taxon>Clostridium</taxon>
    </lineage>
</organism>
<dbReference type="EC" id="5.4.2.12" evidence="1"/>
<dbReference type="EMBL" id="AE015927">
    <property type="protein sequence ID" value="AAO35018.1"/>
    <property type="molecule type" value="Genomic_DNA"/>
</dbReference>
<dbReference type="RefSeq" id="WP_011098689.1">
    <property type="nucleotide sequence ID" value="NC_004557.1"/>
</dbReference>
<dbReference type="SMR" id="Q898R1"/>
<dbReference type="STRING" id="212717.CTC_00381"/>
<dbReference type="GeneID" id="24252696"/>
<dbReference type="KEGG" id="ctc:CTC_00381"/>
<dbReference type="HOGENOM" id="CLU_026099_2_0_9"/>
<dbReference type="OrthoDB" id="9800863at2"/>
<dbReference type="UniPathway" id="UPA00109">
    <property type="reaction ID" value="UER00186"/>
</dbReference>
<dbReference type="Proteomes" id="UP000001412">
    <property type="component" value="Chromosome"/>
</dbReference>
<dbReference type="GO" id="GO:0005829">
    <property type="term" value="C:cytosol"/>
    <property type="evidence" value="ECO:0007669"/>
    <property type="project" value="TreeGrafter"/>
</dbReference>
<dbReference type="GO" id="GO:0030145">
    <property type="term" value="F:manganese ion binding"/>
    <property type="evidence" value="ECO:0007669"/>
    <property type="project" value="UniProtKB-UniRule"/>
</dbReference>
<dbReference type="GO" id="GO:0004619">
    <property type="term" value="F:phosphoglycerate mutase activity"/>
    <property type="evidence" value="ECO:0007669"/>
    <property type="project" value="UniProtKB-EC"/>
</dbReference>
<dbReference type="GO" id="GO:0006007">
    <property type="term" value="P:glucose catabolic process"/>
    <property type="evidence" value="ECO:0007669"/>
    <property type="project" value="InterPro"/>
</dbReference>
<dbReference type="GO" id="GO:0006096">
    <property type="term" value="P:glycolytic process"/>
    <property type="evidence" value="ECO:0007669"/>
    <property type="project" value="UniProtKB-UniRule"/>
</dbReference>
<dbReference type="CDD" id="cd16010">
    <property type="entry name" value="iPGM"/>
    <property type="match status" value="1"/>
</dbReference>
<dbReference type="FunFam" id="3.40.1450.10:FF:000001">
    <property type="entry name" value="2,3-bisphosphoglycerate-independent phosphoglycerate mutase"/>
    <property type="match status" value="1"/>
</dbReference>
<dbReference type="FunFam" id="3.40.720.10:FF:000001">
    <property type="entry name" value="2,3-bisphosphoglycerate-independent phosphoglycerate mutase"/>
    <property type="match status" value="1"/>
</dbReference>
<dbReference type="Gene3D" id="3.40.720.10">
    <property type="entry name" value="Alkaline Phosphatase, subunit A"/>
    <property type="match status" value="1"/>
</dbReference>
<dbReference type="Gene3D" id="3.40.1450.10">
    <property type="entry name" value="BPG-independent phosphoglycerate mutase, domain B"/>
    <property type="match status" value="1"/>
</dbReference>
<dbReference type="HAMAP" id="MF_01038">
    <property type="entry name" value="GpmI"/>
    <property type="match status" value="1"/>
</dbReference>
<dbReference type="InterPro" id="IPR017850">
    <property type="entry name" value="Alkaline_phosphatase_core_sf"/>
</dbReference>
<dbReference type="InterPro" id="IPR011258">
    <property type="entry name" value="BPG-indep_PGM_N"/>
</dbReference>
<dbReference type="InterPro" id="IPR006124">
    <property type="entry name" value="Metalloenzyme"/>
</dbReference>
<dbReference type="InterPro" id="IPR036646">
    <property type="entry name" value="PGAM_B_sf"/>
</dbReference>
<dbReference type="InterPro" id="IPR005995">
    <property type="entry name" value="Pgm_bpd_ind"/>
</dbReference>
<dbReference type="NCBIfam" id="TIGR01307">
    <property type="entry name" value="pgm_bpd_ind"/>
    <property type="match status" value="1"/>
</dbReference>
<dbReference type="PANTHER" id="PTHR31637">
    <property type="entry name" value="2,3-BISPHOSPHOGLYCERATE-INDEPENDENT PHOSPHOGLYCERATE MUTASE"/>
    <property type="match status" value="1"/>
</dbReference>
<dbReference type="PANTHER" id="PTHR31637:SF0">
    <property type="entry name" value="2,3-BISPHOSPHOGLYCERATE-INDEPENDENT PHOSPHOGLYCERATE MUTASE"/>
    <property type="match status" value="1"/>
</dbReference>
<dbReference type="Pfam" id="PF06415">
    <property type="entry name" value="iPGM_N"/>
    <property type="match status" value="1"/>
</dbReference>
<dbReference type="Pfam" id="PF01676">
    <property type="entry name" value="Metalloenzyme"/>
    <property type="match status" value="1"/>
</dbReference>
<dbReference type="PIRSF" id="PIRSF001492">
    <property type="entry name" value="IPGAM"/>
    <property type="match status" value="1"/>
</dbReference>
<dbReference type="SUPFAM" id="SSF64158">
    <property type="entry name" value="2,3-Bisphosphoglycerate-independent phosphoglycerate mutase, substrate-binding domain"/>
    <property type="match status" value="1"/>
</dbReference>
<dbReference type="SUPFAM" id="SSF53649">
    <property type="entry name" value="Alkaline phosphatase-like"/>
    <property type="match status" value="1"/>
</dbReference>
<reference key="1">
    <citation type="journal article" date="2003" name="Proc. Natl. Acad. Sci. U.S.A.">
        <title>The genome sequence of Clostridium tetani, the causative agent of tetanus disease.</title>
        <authorList>
            <person name="Brueggemann H."/>
            <person name="Baeumer S."/>
            <person name="Fricke W.F."/>
            <person name="Wiezer A."/>
            <person name="Liesegang H."/>
            <person name="Decker I."/>
            <person name="Herzberg C."/>
            <person name="Martinez-Arias R."/>
            <person name="Merkl R."/>
            <person name="Henne A."/>
            <person name="Gottschalk G."/>
        </authorList>
    </citation>
    <scope>NUCLEOTIDE SEQUENCE [LARGE SCALE GENOMIC DNA]</scope>
    <source>
        <strain>Massachusetts / E88</strain>
    </source>
</reference>
<gene>
    <name evidence="1" type="primary">gpmI</name>
    <name type="ordered locus">CTC_00381</name>
</gene>
<sequence length="513" mass="57486">MNKKPVMLMILDGFGITNHEDGNAVKMANKPNFDKLLREYPHTQLKASGLNVGLPEGQMGNSEVGHLNIGSGRVIYQELTRITKDINDGVFFENTEINYAIDEAIKNNSSLHLLGLLSDGGVHSHIDHLKAILKLAKDKGLNRVYVHAFLDGRDVPPSSAKEYIINIENYMKELSVGQIATLAGRYYAMDRDKRWERVELAYNALVYGTGELSNSAVEAIEKSYKDNTTDEFVLPTVILKDGKPTGTIKDEDSIIFFNFRPDRARQITRALNDKDFDGFERKRLKLNFITMTQYDKTIENVRIAYKPQSYKNTLGEYVSSLGLNQLRIAETEKYAHVTFFFNGGVETPNKGEDRALIPSPKVATYDLKPEMSAFEVKDEVINRIESNKYDMIILNFANPDMVGHTGVFDAAKTAIEVVDKCVGEISDKILEKEGTVFITADHGNSEQMIDYSTGKPMTAHTTNEVPFVYVSKDAKDKRLKSEGILADIAPTMLTEMGVKIPEEMTGRNLIEGK</sequence>
<evidence type="ECO:0000255" key="1">
    <source>
        <dbReference type="HAMAP-Rule" id="MF_01038"/>
    </source>
</evidence>
<name>GPMI_CLOTE</name>
<accession>Q898R1</accession>
<feature type="chain" id="PRO_0000212138" description="2,3-bisphosphoglycerate-independent phosphoglycerate mutase">
    <location>
        <begin position="1"/>
        <end position="513"/>
    </location>
</feature>
<feature type="active site" description="Phosphoserine intermediate" evidence="1">
    <location>
        <position position="62"/>
    </location>
</feature>
<feature type="binding site" evidence="1">
    <location>
        <position position="12"/>
    </location>
    <ligand>
        <name>Mn(2+)</name>
        <dbReference type="ChEBI" id="CHEBI:29035"/>
        <label>2</label>
    </ligand>
</feature>
<feature type="binding site" evidence="1">
    <location>
        <position position="62"/>
    </location>
    <ligand>
        <name>Mn(2+)</name>
        <dbReference type="ChEBI" id="CHEBI:29035"/>
        <label>2</label>
    </ligand>
</feature>
<feature type="binding site" evidence="1">
    <location>
        <position position="123"/>
    </location>
    <ligand>
        <name>substrate</name>
    </ligand>
</feature>
<feature type="binding site" evidence="1">
    <location>
        <begin position="153"/>
        <end position="154"/>
    </location>
    <ligand>
        <name>substrate</name>
    </ligand>
</feature>
<feature type="binding site" evidence="1">
    <location>
        <position position="185"/>
    </location>
    <ligand>
        <name>substrate</name>
    </ligand>
</feature>
<feature type="binding site" evidence="1">
    <location>
        <position position="191"/>
    </location>
    <ligand>
        <name>substrate</name>
    </ligand>
</feature>
<feature type="binding site" evidence="1">
    <location>
        <begin position="260"/>
        <end position="263"/>
    </location>
    <ligand>
        <name>substrate</name>
    </ligand>
</feature>
<feature type="binding site" evidence="1">
    <location>
        <position position="333"/>
    </location>
    <ligand>
        <name>substrate</name>
    </ligand>
</feature>
<feature type="binding site" evidence="1">
    <location>
        <position position="400"/>
    </location>
    <ligand>
        <name>Mn(2+)</name>
        <dbReference type="ChEBI" id="CHEBI:29035"/>
        <label>1</label>
    </ligand>
</feature>
<feature type="binding site" evidence="1">
    <location>
        <position position="404"/>
    </location>
    <ligand>
        <name>Mn(2+)</name>
        <dbReference type="ChEBI" id="CHEBI:29035"/>
        <label>1</label>
    </ligand>
</feature>
<feature type="binding site" evidence="1">
    <location>
        <position position="441"/>
    </location>
    <ligand>
        <name>Mn(2+)</name>
        <dbReference type="ChEBI" id="CHEBI:29035"/>
        <label>2</label>
    </ligand>
</feature>
<feature type="binding site" evidence="1">
    <location>
        <position position="442"/>
    </location>
    <ligand>
        <name>Mn(2+)</name>
        <dbReference type="ChEBI" id="CHEBI:29035"/>
        <label>2</label>
    </ligand>
</feature>
<feature type="binding site" evidence="1">
    <location>
        <position position="460"/>
    </location>
    <ligand>
        <name>Mn(2+)</name>
        <dbReference type="ChEBI" id="CHEBI:29035"/>
        <label>1</label>
    </ligand>
</feature>
<comment type="function">
    <text evidence="1">Catalyzes the interconversion of 2-phosphoglycerate and 3-phosphoglycerate.</text>
</comment>
<comment type="catalytic activity">
    <reaction evidence="1">
        <text>(2R)-2-phosphoglycerate = (2R)-3-phosphoglycerate</text>
        <dbReference type="Rhea" id="RHEA:15901"/>
        <dbReference type="ChEBI" id="CHEBI:58272"/>
        <dbReference type="ChEBI" id="CHEBI:58289"/>
        <dbReference type="EC" id="5.4.2.12"/>
    </reaction>
</comment>
<comment type="cofactor">
    <cofactor evidence="1">
        <name>Mn(2+)</name>
        <dbReference type="ChEBI" id="CHEBI:29035"/>
    </cofactor>
    <text evidence="1">Binds 2 manganese ions per subunit.</text>
</comment>
<comment type="pathway">
    <text evidence="1">Carbohydrate degradation; glycolysis; pyruvate from D-glyceraldehyde 3-phosphate: step 3/5.</text>
</comment>
<comment type="subunit">
    <text evidence="1">Monomer.</text>
</comment>
<comment type="similarity">
    <text evidence="1">Belongs to the BPG-independent phosphoglycerate mutase family.</text>
</comment>
<keyword id="KW-0324">Glycolysis</keyword>
<keyword id="KW-0413">Isomerase</keyword>
<keyword id="KW-0464">Manganese</keyword>
<keyword id="KW-0479">Metal-binding</keyword>
<keyword id="KW-1185">Reference proteome</keyword>
<proteinExistence type="inferred from homology"/>
<protein>
    <recommendedName>
        <fullName evidence="1">2,3-bisphosphoglycerate-independent phosphoglycerate mutase</fullName>
        <shortName evidence="1">BPG-independent PGAM</shortName>
        <shortName evidence="1">Phosphoglyceromutase</shortName>
        <shortName evidence="1">iPGM</shortName>
        <ecNumber evidence="1">5.4.2.12</ecNumber>
    </recommendedName>
</protein>